<proteinExistence type="inferred from homology"/>
<gene>
    <name evidence="1" type="primary">tmcA</name>
    <name type="ordered locus">Nhal_1498</name>
</gene>
<keyword id="KW-0012">Acyltransferase</keyword>
<keyword id="KW-0067">ATP-binding</keyword>
<keyword id="KW-0963">Cytoplasm</keyword>
<keyword id="KW-0547">Nucleotide-binding</keyword>
<keyword id="KW-1185">Reference proteome</keyword>
<keyword id="KW-0694">RNA-binding</keyword>
<keyword id="KW-0808">Transferase</keyword>
<keyword id="KW-0819">tRNA processing</keyword>
<keyword id="KW-0820">tRNA-binding</keyword>
<evidence type="ECO:0000255" key="1">
    <source>
        <dbReference type="HAMAP-Rule" id="MF_01886"/>
    </source>
</evidence>
<evidence type="ECO:0000256" key="2">
    <source>
        <dbReference type="SAM" id="MobiDB-lite"/>
    </source>
</evidence>
<feature type="chain" id="PRO_0000403122" description="tRNA(Met) cytidine acetyltransferase TmcA">
    <location>
        <begin position="1"/>
        <end position="746"/>
    </location>
</feature>
<feature type="domain" description="N-acetyltransferase" evidence="1">
    <location>
        <begin position="405"/>
        <end position="617"/>
    </location>
</feature>
<feature type="region of interest" description="Disordered" evidence="2">
    <location>
        <begin position="181"/>
        <end position="200"/>
    </location>
</feature>
<feature type="binding site" evidence="1">
    <location>
        <position position="202"/>
    </location>
    <ligand>
        <name>ATP</name>
        <dbReference type="ChEBI" id="CHEBI:30616"/>
    </ligand>
</feature>
<feature type="binding site" evidence="1">
    <location>
        <begin position="228"/>
        <end position="237"/>
    </location>
    <ligand>
        <name>ATP</name>
        <dbReference type="ChEBI" id="CHEBI:30616"/>
    </ligand>
</feature>
<feature type="binding site" evidence="1">
    <location>
        <position position="370"/>
    </location>
    <ligand>
        <name>ATP</name>
        <dbReference type="ChEBI" id="CHEBI:30616"/>
    </ligand>
</feature>
<feature type="binding site" evidence="1">
    <location>
        <begin position="517"/>
        <end position="519"/>
    </location>
    <ligand>
        <name>acetyl-CoA</name>
        <dbReference type="ChEBI" id="CHEBI:57288"/>
    </ligand>
</feature>
<feature type="binding site" evidence="1">
    <location>
        <begin position="524"/>
        <end position="530"/>
    </location>
    <ligand>
        <name>acetyl-CoA</name>
        <dbReference type="ChEBI" id="CHEBI:57288"/>
    </ligand>
</feature>
<feature type="binding site" evidence="1">
    <location>
        <position position="557"/>
    </location>
    <ligand>
        <name>acetyl-CoA</name>
        <dbReference type="ChEBI" id="CHEBI:57288"/>
    </ligand>
</feature>
<feature type="binding site" evidence="1">
    <location>
        <position position="564"/>
    </location>
    <ligand>
        <name>acetyl-CoA</name>
        <dbReference type="ChEBI" id="CHEBI:57288"/>
    </ligand>
</feature>
<accession>D5C1K8</accession>
<reference key="1">
    <citation type="submission" date="2010-04" db="EMBL/GenBank/DDBJ databases">
        <title>Complete genome sequence of Nitrosococcus halophilus Nc4, a salt-adapted, aerobic obligate ammonia-oxidizing sulfur purple bacterium.</title>
        <authorList>
            <consortium name="US DOE Joint Genome Institute"/>
            <person name="Campbell M.A."/>
            <person name="Malfatti S.A."/>
            <person name="Chain P.S.G."/>
            <person name="Heidelberg J.F."/>
            <person name="Ward B.B."/>
            <person name="Klotz M.G."/>
        </authorList>
    </citation>
    <scope>NUCLEOTIDE SEQUENCE [LARGE SCALE GENOMIC DNA]</scope>
    <source>
        <strain>Nc4</strain>
    </source>
</reference>
<organism>
    <name type="scientific">Nitrosococcus halophilus (strain Nc4)</name>
    <dbReference type="NCBI Taxonomy" id="472759"/>
    <lineage>
        <taxon>Bacteria</taxon>
        <taxon>Pseudomonadati</taxon>
        <taxon>Pseudomonadota</taxon>
        <taxon>Gammaproteobacteria</taxon>
        <taxon>Chromatiales</taxon>
        <taxon>Chromatiaceae</taxon>
        <taxon>Nitrosococcus</taxon>
    </lineage>
</organism>
<sequence>MHPILFPPTLDNIRKITASLVAAAKASGHRRALVLSGDREWCLQAAQVSLASTSLEPVLWIAAQAPENAWRMEAAKAHRSLGQEVDAIVFDAYSGFDLDAFGIITGAIRGGGLLLLLTPPLAAWPSFNDPEHARIVTAPYEVTEVTGRFLKRLVRILREAEGVIIIEQGKILPSVPFAAPARAETGGNPPSPGDSACRTEDQGRAVEAIVKVVTGQRRRPVVLTSDRGRGKSAALGIAAARLLQRGLKHIIVTGPRLDAVEPVFRHAQRLLPQATVSRAALHLPEAGMEFAPPDDLIRTSRPADLLLVDEAATIPTPLLERLLQGYSRIAFATTIHGYEGTGRGFALRFHRVLDEKTRGWKGLRLETPIRWRSGDPLEHFVFRALLLDATAAPDSAVASARPETVAVERLDRDALVRDEATLSELFGLLVLAHYQTRPYDLRHLLDGPNLSVYVMRYRGHVVATALLAAEGGFVEETARGIWEGRTRPHGHLLPESLAAHLGLAQAPRLHCARIMRIAVHPAVQGQGLGTHLVDTIIRETGGEGLDYLGSSFGATVELLRFWERLDFLPVRLSVKRGATSGAHSAIVLHPLSSSGQALVKRARERFLVHLPHQLADPLRELEPQLAAWLLRRGDPAGPLPLDSQDWSDVLAFAFGRRVYEVCIGPIWKLTWGALAAPESATLLGEVERNALIVKVLQKRSWQEAAAALELSGRAQVIEVLRRTLRPLVLHFGNEAVRREAERLAGG</sequence>
<name>TMCA_NITHN</name>
<dbReference type="EC" id="2.3.1.193" evidence="1"/>
<dbReference type="EMBL" id="CP001798">
    <property type="protein sequence ID" value="ADE14641.1"/>
    <property type="molecule type" value="Genomic_DNA"/>
</dbReference>
<dbReference type="RefSeq" id="WP_013032530.1">
    <property type="nucleotide sequence ID" value="NC_013960.1"/>
</dbReference>
<dbReference type="SMR" id="D5C1K8"/>
<dbReference type="STRING" id="472759.Nhal_1498"/>
<dbReference type="KEGG" id="nhl:Nhal_1498"/>
<dbReference type="eggNOG" id="COG1444">
    <property type="taxonomic scope" value="Bacteria"/>
</dbReference>
<dbReference type="HOGENOM" id="CLU_004652_1_0_6"/>
<dbReference type="OrthoDB" id="5578851at2"/>
<dbReference type="Proteomes" id="UP000001844">
    <property type="component" value="Chromosome"/>
</dbReference>
<dbReference type="GO" id="GO:0005737">
    <property type="term" value="C:cytoplasm"/>
    <property type="evidence" value="ECO:0007669"/>
    <property type="project" value="UniProtKB-SubCell"/>
</dbReference>
<dbReference type="GO" id="GO:1990883">
    <property type="term" value="F:18S rRNA cytidine N-acetyltransferase activity"/>
    <property type="evidence" value="ECO:0007669"/>
    <property type="project" value="TreeGrafter"/>
</dbReference>
<dbReference type="GO" id="GO:0005524">
    <property type="term" value="F:ATP binding"/>
    <property type="evidence" value="ECO:0007669"/>
    <property type="project" value="UniProtKB-UniRule"/>
</dbReference>
<dbReference type="GO" id="GO:0000049">
    <property type="term" value="F:tRNA binding"/>
    <property type="evidence" value="ECO:0007669"/>
    <property type="project" value="UniProtKB-UniRule"/>
</dbReference>
<dbReference type="GO" id="GO:0051392">
    <property type="term" value="F:tRNA N4-acetyltransferase activity"/>
    <property type="evidence" value="ECO:0007669"/>
    <property type="project" value="UniProtKB-UniRule"/>
</dbReference>
<dbReference type="GO" id="GO:1904812">
    <property type="term" value="P:rRNA acetylation involved in maturation of SSU-rRNA"/>
    <property type="evidence" value="ECO:0007669"/>
    <property type="project" value="TreeGrafter"/>
</dbReference>
<dbReference type="GO" id="GO:0051391">
    <property type="term" value="P:tRNA acetylation"/>
    <property type="evidence" value="ECO:0007669"/>
    <property type="project" value="UniProtKB-UniRule"/>
</dbReference>
<dbReference type="GO" id="GO:0002101">
    <property type="term" value="P:tRNA wobble cytosine modification"/>
    <property type="evidence" value="ECO:0007669"/>
    <property type="project" value="UniProtKB-UniRule"/>
</dbReference>
<dbReference type="CDD" id="cd04301">
    <property type="entry name" value="NAT_SF"/>
    <property type="match status" value="1"/>
</dbReference>
<dbReference type="Gene3D" id="3.40.50.11040">
    <property type="match status" value="1"/>
</dbReference>
<dbReference type="Gene3D" id="3.40.630.30">
    <property type="match status" value="1"/>
</dbReference>
<dbReference type="Gene3D" id="3.40.50.300">
    <property type="entry name" value="P-loop containing nucleotide triphosphate hydrolases"/>
    <property type="match status" value="1"/>
</dbReference>
<dbReference type="Gene3D" id="1.20.120.890">
    <property type="entry name" value="tRNA(Met) cytidine acetyltransferase, tail domain"/>
    <property type="match status" value="1"/>
</dbReference>
<dbReference type="HAMAP" id="MF_01886">
    <property type="entry name" value="tRNA_acetyltr_TmcA"/>
    <property type="match status" value="1"/>
</dbReference>
<dbReference type="InterPro" id="IPR016181">
    <property type="entry name" value="Acyl_CoA_acyltransferase"/>
</dbReference>
<dbReference type="InterPro" id="IPR000182">
    <property type="entry name" value="GNAT_dom"/>
</dbReference>
<dbReference type="InterPro" id="IPR007807">
    <property type="entry name" value="NAT10/TcmA_helicase"/>
</dbReference>
<dbReference type="InterPro" id="IPR027417">
    <property type="entry name" value="P-loop_NTPase"/>
</dbReference>
<dbReference type="InterPro" id="IPR032672">
    <property type="entry name" value="TmcA/NAT10/Kre33"/>
</dbReference>
<dbReference type="InterPro" id="IPR038321">
    <property type="entry name" value="TmcA_C_sf"/>
</dbReference>
<dbReference type="InterPro" id="IPR013562">
    <property type="entry name" value="TmcA_N"/>
</dbReference>
<dbReference type="InterPro" id="IPR024914">
    <property type="entry name" value="tRNA_acetyltr_TmcA"/>
</dbReference>
<dbReference type="PANTHER" id="PTHR10925">
    <property type="entry name" value="N-ACETYLTRANSFERASE 10"/>
    <property type="match status" value="1"/>
</dbReference>
<dbReference type="PANTHER" id="PTHR10925:SF5">
    <property type="entry name" value="RNA CYTIDINE ACETYLTRANSFERASE"/>
    <property type="match status" value="1"/>
</dbReference>
<dbReference type="Pfam" id="PF13718">
    <property type="entry name" value="GNAT_acetyltr_2"/>
    <property type="match status" value="2"/>
</dbReference>
<dbReference type="Pfam" id="PF05127">
    <property type="entry name" value="NAT10_TcmA_helicase"/>
    <property type="match status" value="1"/>
</dbReference>
<dbReference type="Pfam" id="PF08351">
    <property type="entry name" value="TmcA_N"/>
    <property type="match status" value="1"/>
</dbReference>
<dbReference type="SUPFAM" id="SSF55729">
    <property type="entry name" value="Acyl-CoA N-acyltransferases (Nat)"/>
    <property type="match status" value="1"/>
</dbReference>
<dbReference type="SUPFAM" id="SSF52540">
    <property type="entry name" value="P-loop containing nucleoside triphosphate hydrolases"/>
    <property type="match status" value="1"/>
</dbReference>
<dbReference type="PROSITE" id="PS51186">
    <property type="entry name" value="GNAT"/>
    <property type="match status" value="1"/>
</dbReference>
<comment type="function">
    <text evidence="1">Catalyzes the formation of N(4)-acetylcytidine (ac(4)C) at the wobble position of tRNA(Met), by using acetyl-CoA as an acetyl donor and ATP (or GTP).</text>
</comment>
<comment type="catalytic activity">
    <reaction evidence="1">
        <text>cytidine(34) in elongator tRNA(Met) + acetyl-CoA + ATP + H2O = N(4)-acetylcytidine(34) in elongator tRNA(Met) + ADP + phosphate + CoA + H(+)</text>
        <dbReference type="Rhea" id="RHEA:43788"/>
        <dbReference type="Rhea" id="RHEA-COMP:10693"/>
        <dbReference type="Rhea" id="RHEA-COMP:10694"/>
        <dbReference type="ChEBI" id="CHEBI:15377"/>
        <dbReference type="ChEBI" id="CHEBI:15378"/>
        <dbReference type="ChEBI" id="CHEBI:30616"/>
        <dbReference type="ChEBI" id="CHEBI:43474"/>
        <dbReference type="ChEBI" id="CHEBI:57287"/>
        <dbReference type="ChEBI" id="CHEBI:57288"/>
        <dbReference type="ChEBI" id="CHEBI:74900"/>
        <dbReference type="ChEBI" id="CHEBI:82748"/>
        <dbReference type="ChEBI" id="CHEBI:456216"/>
        <dbReference type="EC" id="2.3.1.193"/>
    </reaction>
</comment>
<comment type="subcellular location">
    <subcellularLocation>
        <location evidence="1">Cytoplasm</location>
    </subcellularLocation>
</comment>
<comment type="similarity">
    <text evidence="1">Belongs to the RNA cytidine acetyltransferase family. TmcA subfamily.</text>
</comment>
<protein>
    <recommendedName>
        <fullName evidence="1">tRNA(Met) cytidine acetyltransferase TmcA</fullName>
        <ecNumber evidence="1">2.3.1.193</ecNumber>
    </recommendedName>
</protein>